<dbReference type="EMBL" id="EU189132">
    <property type="protein sequence ID" value="ABW83733.1"/>
    <property type="molecule type" value="Genomic_DNA"/>
</dbReference>
<dbReference type="RefSeq" id="YP_001542569.1">
    <property type="nucleotide sequence ID" value="NC_009963.1"/>
</dbReference>
<dbReference type="SMR" id="A8W3G2"/>
<dbReference type="GeneID" id="5729606"/>
<dbReference type="GO" id="GO:0005762">
    <property type="term" value="C:mitochondrial large ribosomal subunit"/>
    <property type="evidence" value="ECO:0007669"/>
    <property type="project" value="TreeGrafter"/>
</dbReference>
<dbReference type="GO" id="GO:0009536">
    <property type="term" value="C:plastid"/>
    <property type="evidence" value="ECO:0007669"/>
    <property type="project" value="UniProtKB-SubCell"/>
</dbReference>
<dbReference type="GO" id="GO:0003723">
    <property type="term" value="F:RNA binding"/>
    <property type="evidence" value="ECO:0007669"/>
    <property type="project" value="InterPro"/>
</dbReference>
<dbReference type="GO" id="GO:0003735">
    <property type="term" value="F:structural constituent of ribosome"/>
    <property type="evidence" value="ECO:0007669"/>
    <property type="project" value="InterPro"/>
</dbReference>
<dbReference type="GO" id="GO:0016740">
    <property type="term" value="F:transferase activity"/>
    <property type="evidence" value="ECO:0007669"/>
    <property type="project" value="InterPro"/>
</dbReference>
<dbReference type="GO" id="GO:0032543">
    <property type="term" value="P:mitochondrial translation"/>
    <property type="evidence" value="ECO:0007669"/>
    <property type="project" value="TreeGrafter"/>
</dbReference>
<dbReference type="FunFam" id="4.10.950.10:FF:000001">
    <property type="entry name" value="50S ribosomal protein L2"/>
    <property type="match status" value="1"/>
</dbReference>
<dbReference type="FunFam" id="2.30.30.30:FF:000008">
    <property type="entry name" value="50S ribosomal protein L2, chloroplastic"/>
    <property type="match status" value="1"/>
</dbReference>
<dbReference type="FunFam" id="2.40.50.140:FF:000029">
    <property type="entry name" value="50S ribosomal protein L2, chloroplastic"/>
    <property type="match status" value="1"/>
</dbReference>
<dbReference type="Gene3D" id="2.30.30.30">
    <property type="match status" value="1"/>
</dbReference>
<dbReference type="Gene3D" id="2.40.50.140">
    <property type="entry name" value="Nucleic acid-binding proteins"/>
    <property type="match status" value="1"/>
</dbReference>
<dbReference type="Gene3D" id="4.10.950.10">
    <property type="entry name" value="Ribosomal protein L2, domain 3"/>
    <property type="match status" value="1"/>
</dbReference>
<dbReference type="HAMAP" id="MF_01320_B">
    <property type="entry name" value="Ribosomal_uL2_B"/>
    <property type="match status" value="1"/>
</dbReference>
<dbReference type="InterPro" id="IPR012340">
    <property type="entry name" value="NA-bd_OB-fold"/>
</dbReference>
<dbReference type="InterPro" id="IPR014722">
    <property type="entry name" value="Rib_uL2_dom2"/>
</dbReference>
<dbReference type="InterPro" id="IPR002171">
    <property type="entry name" value="Ribosomal_uL2"/>
</dbReference>
<dbReference type="InterPro" id="IPR005880">
    <property type="entry name" value="Ribosomal_uL2_bac/org-type"/>
</dbReference>
<dbReference type="InterPro" id="IPR022669">
    <property type="entry name" value="Ribosomal_uL2_C"/>
</dbReference>
<dbReference type="InterPro" id="IPR022671">
    <property type="entry name" value="Ribosomal_uL2_CS"/>
</dbReference>
<dbReference type="InterPro" id="IPR014726">
    <property type="entry name" value="Ribosomal_uL2_dom3"/>
</dbReference>
<dbReference type="InterPro" id="IPR022666">
    <property type="entry name" value="Ribosomal_uL2_RNA-bd_dom"/>
</dbReference>
<dbReference type="InterPro" id="IPR008991">
    <property type="entry name" value="Translation_prot_SH3-like_sf"/>
</dbReference>
<dbReference type="NCBIfam" id="TIGR01171">
    <property type="entry name" value="rplB_bact"/>
    <property type="match status" value="1"/>
</dbReference>
<dbReference type="PANTHER" id="PTHR13691:SF5">
    <property type="entry name" value="LARGE RIBOSOMAL SUBUNIT PROTEIN UL2M"/>
    <property type="match status" value="1"/>
</dbReference>
<dbReference type="PANTHER" id="PTHR13691">
    <property type="entry name" value="RIBOSOMAL PROTEIN L2"/>
    <property type="match status" value="1"/>
</dbReference>
<dbReference type="Pfam" id="PF00181">
    <property type="entry name" value="Ribosomal_L2"/>
    <property type="match status" value="1"/>
</dbReference>
<dbReference type="Pfam" id="PF03947">
    <property type="entry name" value="Ribosomal_L2_C"/>
    <property type="match status" value="1"/>
</dbReference>
<dbReference type="PIRSF" id="PIRSF002158">
    <property type="entry name" value="Ribosomal_L2"/>
    <property type="match status" value="1"/>
</dbReference>
<dbReference type="SMART" id="SM01383">
    <property type="entry name" value="Ribosomal_L2"/>
    <property type="match status" value="1"/>
</dbReference>
<dbReference type="SMART" id="SM01382">
    <property type="entry name" value="Ribosomal_L2_C"/>
    <property type="match status" value="1"/>
</dbReference>
<dbReference type="SUPFAM" id="SSF50249">
    <property type="entry name" value="Nucleic acid-binding proteins"/>
    <property type="match status" value="1"/>
</dbReference>
<dbReference type="SUPFAM" id="SSF50104">
    <property type="entry name" value="Translation proteins SH3-like domain"/>
    <property type="match status" value="1"/>
</dbReference>
<dbReference type="PROSITE" id="PS00467">
    <property type="entry name" value="RIBOSOMAL_L2"/>
    <property type="match status" value="1"/>
</dbReference>
<geneLocation type="plastid"/>
<reference key="1">
    <citation type="journal article" date="2007" name="BMC Plant Biol.">
        <title>Complete plastid genome sequences suggest strong selection for retention of photosynthetic genes in the parasitic plant genus Cuscuta.</title>
        <authorList>
            <person name="McNeal J.R."/>
            <person name="Kuehl J.V."/>
            <person name="Boore J.L."/>
            <person name="dePamphilis C.W."/>
        </authorList>
    </citation>
    <scope>NUCLEOTIDE SEQUENCE [LARGE SCALE GENOMIC DNA]</scope>
</reference>
<accession>A8W3G2</accession>
<comment type="subunit">
    <text evidence="1">Part of the 50S ribosomal subunit.</text>
</comment>
<comment type="subcellular location">
    <subcellularLocation>
        <location>Plastid</location>
    </subcellularLocation>
</comment>
<comment type="similarity">
    <text evidence="4">Belongs to the universal ribosomal protein uL2 family.</text>
</comment>
<sequence>MVRKLNKTYAPSTRNGTIKGQVKSARGKNLIYGKHRCGKGRNARGIITARHRGGGHKRLYRKIDFRRNKKNIYGRIITIEYDPNRNAHICLIHYRNGEKGYILHPRGTIIGDTIVSGTEVSIKIGNALPLTEMPLGTAIHNLEITRGKGGQLARAAGAVAKLIAKEGKSATLKLPSGEVRLISKNCSATVGQVGNVGVNQKSLGRAGAQRWLGKRPVVRGVVMNPVDHPHGGGEGRAPIGRKKPTTPWGYPALGRKTRKGNKYSDKFILRHRRKQQRI</sequence>
<proteinExistence type="inferred from homology"/>
<feature type="chain" id="PRO_0000342539" description="Large ribosomal subunit protein uL2c">
    <location>
        <begin position="1"/>
        <end position="278"/>
    </location>
</feature>
<feature type="region of interest" description="Disordered" evidence="3">
    <location>
        <begin position="224"/>
        <end position="256"/>
    </location>
</feature>
<organism>
    <name type="scientific">Cuscuta exaltata</name>
    <name type="common">Tall dodder</name>
    <dbReference type="NCBI Taxonomy" id="476139"/>
    <lineage>
        <taxon>Eukaryota</taxon>
        <taxon>Viridiplantae</taxon>
        <taxon>Streptophyta</taxon>
        <taxon>Embryophyta</taxon>
        <taxon>Tracheophyta</taxon>
        <taxon>Spermatophyta</taxon>
        <taxon>Magnoliopsida</taxon>
        <taxon>eudicotyledons</taxon>
        <taxon>Gunneridae</taxon>
        <taxon>Pentapetalae</taxon>
        <taxon>asterids</taxon>
        <taxon>lamiids</taxon>
        <taxon>Solanales</taxon>
        <taxon>Convolvulaceae</taxon>
        <taxon>Cuscuteae</taxon>
        <taxon>Cuscuta</taxon>
        <taxon>Cuscuta subgen. Monogynella</taxon>
    </lineage>
</organism>
<keyword id="KW-0934">Plastid</keyword>
<keyword id="KW-0687">Ribonucleoprotein</keyword>
<keyword id="KW-0689">Ribosomal protein</keyword>
<evidence type="ECO:0000250" key="1"/>
<evidence type="ECO:0000255" key="2">
    <source>
        <dbReference type="HAMAP-Rule" id="MF_01320"/>
    </source>
</evidence>
<evidence type="ECO:0000256" key="3">
    <source>
        <dbReference type="SAM" id="MobiDB-lite"/>
    </source>
</evidence>
<evidence type="ECO:0000305" key="4"/>
<name>RK2_CUSEX</name>
<gene>
    <name type="primary">rpl2</name>
</gene>
<protein>
    <recommendedName>
        <fullName evidence="2">Large ribosomal subunit protein uL2c</fullName>
    </recommendedName>
    <alternativeName>
        <fullName evidence="4">50S ribosomal protein L2, plastid</fullName>
    </alternativeName>
</protein>